<name>CRTM_STAAU</name>
<protein>
    <recommendedName>
        <fullName evidence="1">4,4'-diapophytoene synthase</fullName>
        <shortName evidence="1">DAP synthase</shortName>
        <ecNumber evidence="2">2.5.1.96</ecNumber>
    </recommendedName>
    <alternativeName>
        <fullName evidence="1">C30 carotenoid synthase</fullName>
    </alternativeName>
    <alternativeName>
        <fullName evidence="3">Dehydrosqualene synthase</fullName>
    </alternativeName>
</protein>
<evidence type="ECO:0000250" key="1">
    <source>
        <dbReference type="UniProtKB" id="Q2FV59"/>
    </source>
</evidence>
<evidence type="ECO:0000269" key="2">
    <source>
    </source>
</evidence>
<evidence type="ECO:0000303" key="3">
    <source>
    </source>
</evidence>
<evidence type="ECO:0000305" key="4"/>
<evidence type="ECO:0000305" key="5">
    <source>
    </source>
</evidence>
<evidence type="ECO:0007744" key="6">
    <source>
        <dbReference type="PDB" id="2ZCQ"/>
    </source>
</evidence>
<evidence type="ECO:0007744" key="7">
    <source>
        <dbReference type="PDB" id="2ZCR"/>
    </source>
</evidence>
<evidence type="ECO:0007744" key="8">
    <source>
        <dbReference type="PDB" id="2ZCS"/>
    </source>
</evidence>
<evidence type="ECO:0007744" key="9">
    <source>
        <dbReference type="PDB" id="3W7F"/>
    </source>
</evidence>
<evidence type="ECO:0007829" key="10">
    <source>
        <dbReference type="PDB" id="3ACX"/>
    </source>
</evidence>
<evidence type="ECO:0007829" key="11">
    <source>
        <dbReference type="PDB" id="3VJD"/>
    </source>
</evidence>
<feature type="chain" id="PRO_0000347335" description="4,4'-diapophytoene synthase">
    <location>
        <begin position="1"/>
        <end position="287"/>
    </location>
</feature>
<feature type="binding site" evidence="5 8 9">
    <location>
        <begin position="18"/>
        <end position="21"/>
    </location>
    <ligand>
        <name>(2E,6E)-farnesyl diphosphate</name>
        <dbReference type="ChEBI" id="CHEBI:175763"/>
        <label>1</label>
    </ligand>
</feature>
<feature type="binding site" evidence="5 8 9">
    <location>
        <position position="41"/>
    </location>
    <ligand>
        <name>(2E,6E)-farnesyl diphosphate</name>
        <dbReference type="ChEBI" id="CHEBI:175763"/>
        <label>1</label>
    </ligand>
</feature>
<feature type="binding site" evidence="5 6 9">
    <location>
        <position position="45"/>
    </location>
    <ligand>
        <name>(2E,6E)-farnesyl diphosphate</name>
        <dbReference type="ChEBI" id="CHEBI:175763"/>
        <label>1</label>
    </ligand>
</feature>
<feature type="binding site" evidence="5 6 9">
    <location>
        <position position="45"/>
    </location>
    <ligand>
        <name>(2E,6E)-farnesyl diphosphate</name>
        <dbReference type="ChEBI" id="CHEBI:175763"/>
        <label>2</label>
    </ligand>
</feature>
<feature type="binding site" evidence="2 6 9">
    <location>
        <position position="48"/>
    </location>
    <ligand>
        <name>Mg(2+)</name>
        <dbReference type="ChEBI" id="CHEBI:18420"/>
        <label>1</label>
    </ligand>
</feature>
<feature type="binding site" evidence="2 6 9">
    <location>
        <position position="52"/>
    </location>
    <ligand>
        <name>Mg(2+)</name>
        <dbReference type="ChEBI" id="CHEBI:18420"/>
        <label>1</label>
    </ligand>
</feature>
<feature type="binding site" evidence="5 6 7">
    <location>
        <position position="165"/>
    </location>
    <ligand>
        <name>(2E,6E)-farnesyl diphosphate</name>
        <dbReference type="ChEBI" id="CHEBI:175763"/>
        <label>2</label>
    </ligand>
</feature>
<feature type="binding site" evidence="2 6 7 9">
    <location>
        <position position="168"/>
    </location>
    <ligand>
        <name>Mg(2+)</name>
        <dbReference type="ChEBI" id="CHEBI:18420"/>
        <label>2</label>
    </ligand>
</feature>
<feature type="binding site" evidence="5 9">
    <location>
        <position position="171"/>
    </location>
    <ligand>
        <name>(2E,6E)-farnesyl diphosphate</name>
        <dbReference type="ChEBI" id="CHEBI:175763"/>
        <label>1</label>
    </ligand>
</feature>
<feature type="binding site" evidence="2 6 7 9">
    <location>
        <position position="172"/>
    </location>
    <ligand>
        <name>Mg(2+)</name>
        <dbReference type="ChEBI" id="CHEBI:18420"/>
        <label>2</label>
    </ligand>
</feature>
<feature type="binding site" evidence="5 9">
    <location>
        <position position="248"/>
    </location>
    <ligand>
        <name>(2E,6E)-farnesyl diphosphate</name>
        <dbReference type="ChEBI" id="CHEBI:175763"/>
        <label>1</label>
    </ligand>
</feature>
<feature type="helix" evidence="10">
    <location>
        <begin position="3"/>
        <end position="18"/>
    </location>
</feature>
<feature type="helix" evidence="10">
    <location>
        <begin position="20"/>
        <end position="26"/>
    </location>
</feature>
<feature type="helix" evidence="10">
    <location>
        <begin position="31"/>
        <end position="49"/>
    </location>
</feature>
<feature type="helix" evidence="10">
    <location>
        <begin position="50"/>
        <end position="53"/>
    </location>
</feature>
<feature type="strand" evidence="11">
    <location>
        <begin position="55"/>
        <end position="57"/>
    </location>
</feature>
<feature type="helix" evidence="10">
    <location>
        <begin position="58"/>
        <end position="72"/>
    </location>
</feature>
<feature type="helix" evidence="10">
    <location>
        <begin position="84"/>
        <end position="96"/>
    </location>
</feature>
<feature type="helix" evidence="10">
    <location>
        <begin position="101"/>
        <end position="114"/>
    </location>
</feature>
<feature type="helix" evidence="10">
    <location>
        <begin position="123"/>
        <end position="133"/>
    </location>
</feature>
<feature type="helix" evidence="10">
    <location>
        <begin position="135"/>
        <end position="145"/>
    </location>
</feature>
<feature type="helix" evidence="10">
    <location>
        <begin position="151"/>
        <end position="171"/>
    </location>
</feature>
<feature type="helix" evidence="10">
    <location>
        <begin position="173"/>
        <end position="178"/>
    </location>
</feature>
<feature type="helix" evidence="10">
    <location>
        <begin position="186"/>
        <end position="192"/>
    </location>
</feature>
<feature type="helix" evidence="10">
    <location>
        <begin position="196"/>
        <end position="202"/>
    </location>
</feature>
<feature type="helix" evidence="10">
    <location>
        <begin position="206"/>
        <end position="228"/>
    </location>
</feature>
<feature type="helix" evidence="10">
    <location>
        <begin position="229"/>
        <end position="232"/>
    </location>
</feature>
<feature type="helix" evidence="10">
    <location>
        <begin position="237"/>
        <end position="257"/>
    </location>
</feature>
<feature type="turn" evidence="10">
    <location>
        <begin position="258"/>
        <end position="260"/>
    </location>
</feature>
<feature type="strand" evidence="10">
    <location>
        <begin position="262"/>
        <end position="264"/>
    </location>
</feature>
<feature type="helix" evidence="10">
    <location>
        <begin position="270"/>
        <end position="283"/>
    </location>
</feature>
<dbReference type="EC" id="2.5.1.96" evidence="2"/>
<dbReference type="EMBL" id="AM920687">
    <property type="protein sequence ID" value="CAP47341.1"/>
    <property type="molecule type" value="Genomic_DNA"/>
</dbReference>
<dbReference type="RefSeq" id="WP_000178319.1">
    <property type="nucleotide sequence ID" value="NZ_WKIS01000001.1"/>
</dbReference>
<dbReference type="PDB" id="2ZCO">
    <property type="method" value="X-ray"/>
    <property type="resolution" value="1.58 A"/>
    <property type="chains" value="A=1-287"/>
</dbReference>
<dbReference type="PDB" id="2ZCQ">
    <property type="method" value="X-ray"/>
    <property type="resolution" value="2.38 A"/>
    <property type="chains" value="A=1-287"/>
</dbReference>
<dbReference type="PDB" id="2ZCR">
    <property type="method" value="X-ray"/>
    <property type="resolution" value="1.92 A"/>
    <property type="chains" value="A=1-287"/>
</dbReference>
<dbReference type="PDB" id="2ZCS">
    <property type="method" value="X-ray"/>
    <property type="resolution" value="2.03 A"/>
    <property type="chains" value="A=1-287"/>
</dbReference>
<dbReference type="PDB" id="2ZY1">
    <property type="method" value="X-ray"/>
    <property type="resolution" value="1.78 A"/>
    <property type="chains" value="A=1-287"/>
</dbReference>
<dbReference type="PDB" id="3ACW">
    <property type="method" value="X-ray"/>
    <property type="resolution" value="1.63 A"/>
    <property type="chains" value="A=1-287"/>
</dbReference>
<dbReference type="PDB" id="3ACX">
    <property type="method" value="X-ray"/>
    <property type="resolution" value="1.31 A"/>
    <property type="chains" value="A=1-287"/>
</dbReference>
<dbReference type="PDB" id="3ACY">
    <property type="method" value="X-ray"/>
    <property type="resolution" value="1.84 A"/>
    <property type="chains" value="A=1-287"/>
</dbReference>
<dbReference type="PDB" id="3ADZ">
    <property type="method" value="X-ray"/>
    <property type="resolution" value="1.89 A"/>
    <property type="chains" value="A=1-287"/>
</dbReference>
<dbReference type="PDB" id="3AE0">
    <property type="method" value="X-ray"/>
    <property type="resolution" value="2.37 A"/>
    <property type="chains" value="A/B=1-287"/>
</dbReference>
<dbReference type="PDB" id="3LGZ">
    <property type="method" value="X-ray"/>
    <property type="resolution" value="2.41 A"/>
    <property type="chains" value="B=1-287"/>
</dbReference>
<dbReference type="PDB" id="3NPR">
    <property type="method" value="X-ray"/>
    <property type="resolution" value="2.00 A"/>
    <property type="chains" value="A=1-287"/>
</dbReference>
<dbReference type="PDB" id="3TFN">
    <property type="method" value="X-ray"/>
    <property type="resolution" value="2.07 A"/>
    <property type="chains" value="A=1-287"/>
</dbReference>
<dbReference type="PDB" id="3TFP">
    <property type="method" value="X-ray"/>
    <property type="resolution" value="2.00 A"/>
    <property type="chains" value="A=1-287"/>
</dbReference>
<dbReference type="PDB" id="3TFV">
    <property type="method" value="X-ray"/>
    <property type="resolution" value="3.00 A"/>
    <property type="chains" value="A=1-287"/>
</dbReference>
<dbReference type="PDB" id="3VJD">
    <property type="method" value="X-ray"/>
    <property type="resolution" value="1.48 A"/>
    <property type="chains" value="A=1-287"/>
</dbReference>
<dbReference type="PDB" id="3VJE">
    <property type="method" value="X-ray"/>
    <property type="resolution" value="2.12 A"/>
    <property type="chains" value="A/B=1-287"/>
</dbReference>
<dbReference type="PDB" id="3W7F">
    <property type="method" value="X-ray"/>
    <property type="resolution" value="2.25 A"/>
    <property type="chains" value="A/B=1-287"/>
</dbReference>
<dbReference type="PDB" id="4E9U">
    <property type="method" value="X-ray"/>
    <property type="resolution" value="2.10 A"/>
    <property type="chains" value="A=1-287"/>
</dbReference>
<dbReference type="PDB" id="4E9Z">
    <property type="method" value="X-ray"/>
    <property type="resolution" value="2.06 A"/>
    <property type="chains" value="A=1-287"/>
</dbReference>
<dbReference type="PDB" id="4EA0">
    <property type="method" value="X-ray"/>
    <property type="resolution" value="2.12 A"/>
    <property type="chains" value="A/B=1-287"/>
</dbReference>
<dbReference type="PDB" id="4EA1">
    <property type="method" value="X-ray"/>
    <property type="resolution" value="2.46 A"/>
    <property type="chains" value="A=1-287"/>
</dbReference>
<dbReference type="PDB" id="4EA2">
    <property type="method" value="X-ray"/>
    <property type="resolution" value="2.05 A"/>
    <property type="chains" value="A=1-287"/>
</dbReference>
<dbReference type="PDB" id="4F6V">
    <property type="method" value="X-ray"/>
    <property type="resolution" value="2.30 A"/>
    <property type="chains" value="A=1-287"/>
</dbReference>
<dbReference type="PDB" id="4F6X">
    <property type="method" value="X-ray"/>
    <property type="resolution" value="1.98 A"/>
    <property type="chains" value="A=1-287"/>
</dbReference>
<dbReference type="PDBsum" id="2ZCO"/>
<dbReference type="PDBsum" id="2ZCQ"/>
<dbReference type="PDBsum" id="2ZCR"/>
<dbReference type="PDBsum" id="2ZCS"/>
<dbReference type="PDBsum" id="2ZY1"/>
<dbReference type="PDBsum" id="3ACW"/>
<dbReference type="PDBsum" id="3ACX"/>
<dbReference type="PDBsum" id="3ACY"/>
<dbReference type="PDBsum" id="3ADZ"/>
<dbReference type="PDBsum" id="3AE0"/>
<dbReference type="PDBsum" id="3LGZ"/>
<dbReference type="PDBsum" id="3NPR"/>
<dbReference type="PDBsum" id="3TFN"/>
<dbReference type="PDBsum" id="3TFP"/>
<dbReference type="PDBsum" id="3TFV"/>
<dbReference type="PDBsum" id="3VJD"/>
<dbReference type="PDBsum" id="3VJE"/>
<dbReference type="PDBsum" id="3W7F"/>
<dbReference type="PDBsum" id="4E9U"/>
<dbReference type="PDBsum" id="4E9Z"/>
<dbReference type="PDBsum" id="4EA0"/>
<dbReference type="PDBsum" id="4EA1"/>
<dbReference type="PDBsum" id="4EA2"/>
<dbReference type="PDBsum" id="4F6V"/>
<dbReference type="PDBsum" id="4F6X"/>
<dbReference type="SMR" id="A9JQL9"/>
<dbReference type="BindingDB" id="A9JQL9"/>
<dbReference type="ChEMBL" id="CHEMBL5440"/>
<dbReference type="DrugBank" id="DB07420">
    <property type="generic name" value="(1R)-4-(3-phenoxyphenyl)-1-phosphonobutane-1-sulfonic acid"/>
</dbReference>
<dbReference type="DrugBank" id="DB04695">
    <property type="generic name" value="Farnesyl thiopyrophosphate"/>
</dbReference>
<dbReference type="DrugBank" id="DB07424">
    <property type="generic name" value="Tripotassium (1R)-4-biphenyl-4-yl-1-phosphonatobutane-1-sulfonate"/>
</dbReference>
<dbReference type="OMA" id="KLYCYRV"/>
<dbReference type="BRENDA" id="2.5.1.96">
    <property type="organism ID" value="3352"/>
</dbReference>
<dbReference type="UniPathway" id="UPA00029">
    <property type="reaction ID" value="UER00556"/>
</dbReference>
<dbReference type="EvolutionaryTrace" id="A9JQL9"/>
<dbReference type="GO" id="GO:0004311">
    <property type="term" value="F:geranylgeranyl diphosphate synthase activity"/>
    <property type="evidence" value="ECO:0007669"/>
    <property type="project" value="InterPro"/>
</dbReference>
<dbReference type="GO" id="GO:0046872">
    <property type="term" value="F:metal ion binding"/>
    <property type="evidence" value="ECO:0007669"/>
    <property type="project" value="UniProtKB-KW"/>
</dbReference>
<dbReference type="GO" id="GO:0051996">
    <property type="term" value="F:squalene synthase [NAD(P)H] activity"/>
    <property type="evidence" value="ECO:0007669"/>
    <property type="project" value="InterPro"/>
</dbReference>
<dbReference type="GO" id="GO:0016117">
    <property type="term" value="P:carotenoid biosynthetic process"/>
    <property type="evidence" value="ECO:0007669"/>
    <property type="project" value="UniProtKB-KW"/>
</dbReference>
<dbReference type="CDD" id="cd00683">
    <property type="entry name" value="Trans_IPPS_HH"/>
    <property type="match status" value="1"/>
</dbReference>
<dbReference type="FunFam" id="1.10.600.10:FF:000028">
    <property type="entry name" value="Dehydrosqualene synthase"/>
    <property type="match status" value="1"/>
</dbReference>
<dbReference type="Gene3D" id="1.10.600.10">
    <property type="entry name" value="Farnesyl Diphosphate Synthase"/>
    <property type="match status" value="1"/>
</dbReference>
<dbReference type="InterPro" id="IPR008949">
    <property type="entry name" value="Isoprenoid_synthase_dom_sf"/>
</dbReference>
<dbReference type="InterPro" id="IPR002060">
    <property type="entry name" value="Squ/phyt_synthse"/>
</dbReference>
<dbReference type="InterPro" id="IPR019845">
    <property type="entry name" value="Squalene/phytoene_synthase_CS"/>
</dbReference>
<dbReference type="InterPro" id="IPR044843">
    <property type="entry name" value="Trans_IPPS_bact-type"/>
</dbReference>
<dbReference type="InterPro" id="IPR033904">
    <property type="entry name" value="Trans_IPPS_HH"/>
</dbReference>
<dbReference type="PANTHER" id="PTHR31480">
    <property type="entry name" value="BIFUNCTIONAL LYCOPENE CYCLASE/PHYTOENE SYNTHASE"/>
    <property type="match status" value="1"/>
</dbReference>
<dbReference type="Pfam" id="PF00494">
    <property type="entry name" value="SQS_PSY"/>
    <property type="match status" value="1"/>
</dbReference>
<dbReference type="SFLD" id="SFLDG01212">
    <property type="entry name" value="Phytoene_synthase_like"/>
    <property type="match status" value="1"/>
</dbReference>
<dbReference type="SFLD" id="SFLDG01018">
    <property type="entry name" value="Squalene/Phytoene_Synthase_Lik"/>
    <property type="match status" value="1"/>
</dbReference>
<dbReference type="SUPFAM" id="SSF48576">
    <property type="entry name" value="Terpenoid synthases"/>
    <property type="match status" value="1"/>
</dbReference>
<dbReference type="PROSITE" id="PS01044">
    <property type="entry name" value="SQUALEN_PHYTOEN_SYN_1"/>
    <property type="match status" value="1"/>
</dbReference>
<comment type="function">
    <text evidence="2">Involved in the biosynthesis of the yellow-orange carotenoid staphyloxanthin, which plays a role in the virulence via its protective function against oxidative stress. Catalyzes the head-to-head condensation of two molecules of farnesyl diphosphate (FPP) into the colorless C(30) carotenoid 4,4'-diapophytoene (dehydrosqualene).</text>
</comment>
<comment type="catalytic activity">
    <reaction evidence="2">
        <text>2 (2E,6E)-farnesyl diphosphate = 15-cis-4,4'-diapophytoene + 2 diphosphate</text>
        <dbReference type="Rhea" id="RHEA:31547"/>
        <dbReference type="ChEBI" id="CHEBI:33019"/>
        <dbReference type="ChEBI" id="CHEBI:62738"/>
        <dbReference type="ChEBI" id="CHEBI:175763"/>
        <dbReference type="EC" id="2.5.1.96"/>
    </reaction>
</comment>
<comment type="cofactor">
    <cofactor evidence="2">
        <name>Mg(2+)</name>
        <dbReference type="ChEBI" id="CHEBI:18420"/>
    </cofactor>
    <text evidence="2">Binds 2 Mg(2+) ions per subunit. A third Mg(2+) ion binds between the 2 farnesyl diphosphate (FPP).</text>
</comment>
<comment type="pathway">
    <text evidence="4">Carotenoid biosynthesis; staphyloxanthin biosynthesis; staphyloxanthin from farnesyl diphosphate: step 1/5.</text>
</comment>
<comment type="similarity">
    <text evidence="4">Belongs to the phytoene/squalene synthase family. CrtM subfamily.</text>
</comment>
<organism>
    <name type="scientific">Staphylococcus aureus</name>
    <dbReference type="NCBI Taxonomy" id="1280"/>
    <lineage>
        <taxon>Bacteria</taxon>
        <taxon>Bacillati</taxon>
        <taxon>Bacillota</taxon>
        <taxon>Bacilli</taxon>
        <taxon>Bacillales</taxon>
        <taxon>Staphylococcaceae</taxon>
        <taxon>Staphylococcus</taxon>
    </lineage>
</organism>
<proteinExistence type="evidence at protein level"/>
<gene>
    <name evidence="3" type="primary">crtM</name>
</gene>
<keyword id="KW-0002">3D-structure</keyword>
<keyword id="KW-0125">Carotenoid biosynthesis</keyword>
<keyword id="KW-0460">Magnesium</keyword>
<keyword id="KW-0479">Metal-binding</keyword>
<keyword id="KW-0808">Transferase</keyword>
<keyword id="KW-0843">Virulence</keyword>
<reference key="1">
    <citation type="journal article" date="2008" name="Science">
        <title>A cholesterol biosynthesis inhibitor blocks Staphylococcus aureus virulence.</title>
        <authorList>
            <person name="Liu C.-I."/>
            <person name="Liu G.Y."/>
            <person name="Song Y."/>
            <person name="Yin F."/>
            <person name="Hensler M.E."/>
            <person name="Jeng W.-Y."/>
            <person name="Nizet V."/>
            <person name="Wang A.H.-J."/>
            <person name="Oldfield E."/>
        </authorList>
    </citation>
    <scope>NUCLEOTIDE SEQUENCE [GENOMIC DNA]</scope>
    <scope>X-RAY CRYSTALLOGRAPHY (1.58 ANGSTROMS) IN COMPLEXES WITH SUBSTRATE ANALOGS AND MAGNESIUM IONS</scope>
    <scope>FUNCTION</scope>
    <scope>CATALYTIC ACTIVITY</scope>
    <scope>COFACTOR</scope>
    <source>
        <strain>ATCC 27659 / U9N0</strain>
    </source>
</reference>
<sequence length="287" mass="34313">MTMMDMNFKYCHKIMKKHSKSFSYAFDLLPEDQRKAVWAIYAVCRKIDDSIDVYGDIQFLNQIKEDIQSIEKYPYEYHHFQSDRRIMMALQHVAQHKNIAFQSFYNLIDTVYKDQHFTMFETDAELFGYCYGVAGTVGEVLTPILSDHETHQTYDVARRLGESLQLINILRDVGEDFENERIYFSKQRLKQYEVDIAEVYQNGVNNHYIDLWEYYAAIAEKDFRDVMDQIKVFSIEAQPIIELAARIYIEILDEVRQANYTLHERVFVEKRKKAKLFHEINSKYHRI</sequence>
<accession>A9JQL9</accession>